<protein>
    <recommendedName>
        <fullName evidence="1">Succinylglutamate desuccinylase</fullName>
        <ecNumber evidence="1">3.5.1.96</ecNumber>
    </recommendedName>
</protein>
<gene>
    <name evidence="1" type="primary">astE</name>
    <name type="ordered locus">Swoo_2277</name>
</gene>
<feature type="chain" id="PRO_1000133647" description="Succinylglutamate desuccinylase">
    <location>
        <begin position="1"/>
        <end position="345"/>
    </location>
</feature>
<feature type="active site" evidence="1">
    <location>
        <position position="224"/>
    </location>
</feature>
<feature type="binding site" evidence="1">
    <location>
        <position position="63"/>
    </location>
    <ligand>
        <name>Zn(2+)</name>
        <dbReference type="ChEBI" id="CHEBI:29105"/>
    </ligand>
</feature>
<feature type="binding site" evidence="1">
    <location>
        <position position="66"/>
    </location>
    <ligand>
        <name>Zn(2+)</name>
        <dbReference type="ChEBI" id="CHEBI:29105"/>
    </ligand>
</feature>
<feature type="binding site" evidence="1">
    <location>
        <position position="160"/>
    </location>
    <ligand>
        <name>Zn(2+)</name>
        <dbReference type="ChEBI" id="CHEBI:29105"/>
    </ligand>
</feature>
<evidence type="ECO:0000255" key="1">
    <source>
        <dbReference type="HAMAP-Rule" id="MF_00767"/>
    </source>
</evidence>
<proteinExistence type="inferred from homology"/>
<name>ASTE_SHEWM</name>
<sequence>MLQALKESKDFLQLTLAQPQHFDETFTFMLGSHTQVEVWDTGVIVFEPKVARGKDIVLSCAVHGNETAPIELCNGLIKSLLEERLIAEQRVLFLFGNPPAIINGTRFIDENLNRLFNGAHSVGEGLVNPERIRAKKLEFYVDKFFSSSKDNSHKIHYDLHTAIRGSKHEKFAIYPYRPGRKYSGEQIMFLEACGIDTVLFHHEPTTTFSYFSSLNYQADAFTIELGKVLPMGQNDMTRFIALNEMLSRLIGNKSLELPDFNAKTVNLYQVCRAINKGFDDFEFTFANDVENFTSFPKGYILAKEGGENIKVEHEVEAIVFPNAKVPVGQRTVLCLKPASTENIDG</sequence>
<keyword id="KW-0056">Arginine metabolism</keyword>
<keyword id="KW-0378">Hydrolase</keyword>
<keyword id="KW-0479">Metal-binding</keyword>
<keyword id="KW-1185">Reference proteome</keyword>
<keyword id="KW-0862">Zinc</keyword>
<accession>B1KEI0</accession>
<dbReference type="EC" id="3.5.1.96" evidence="1"/>
<dbReference type="EMBL" id="CP000961">
    <property type="protein sequence ID" value="ACA86558.1"/>
    <property type="molecule type" value="Genomic_DNA"/>
</dbReference>
<dbReference type="RefSeq" id="WP_012324901.1">
    <property type="nucleotide sequence ID" value="NC_010506.1"/>
</dbReference>
<dbReference type="SMR" id="B1KEI0"/>
<dbReference type="STRING" id="392500.Swoo_2277"/>
<dbReference type="KEGG" id="swd:Swoo_2277"/>
<dbReference type="eggNOG" id="COG2988">
    <property type="taxonomic scope" value="Bacteria"/>
</dbReference>
<dbReference type="HOGENOM" id="CLU_071608_0_0_6"/>
<dbReference type="UniPathway" id="UPA00185">
    <property type="reaction ID" value="UER00283"/>
</dbReference>
<dbReference type="Proteomes" id="UP000002168">
    <property type="component" value="Chromosome"/>
</dbReference>
<dbReference type="GO" id="GO:0016788">
    <property type="term" value="F:hydrolase activity, acting on ester bonds"/>
    <property type="evidence" value="ECO:0007669"/>
    <property type="project" value="UniProtKB-UniRule"/>
</dbReference>
<dbReference type="GO" id="GO:0009017">
    <property type="term" value="F:succinylglutamate desuccinylase activity"/>
    <property type="evidence" value="ECO:0007669"/>
    <property type="project" value="UniProtKB-EC"/>
</dbReference>
<dbReference type="GO" id="GO:0008270">
    <property type="term" value="F:zinc ion binding"/>
    <property type="evidence" value="ECO:0007669"/>
    <property type="project" value="UniProtKB-UniRule"/>
</dbReference>
<dbReference type="GO" id="GO:0019544">
    <property type="term" value="P:arginine catabolic process to glutamate"/>
    <property type="evidence" value="ECO:0007669"/>
    <property type="project" value="UniProtKB-UniRule"/>
</dbReference>
<dbReference type="GO" id="GO:0019545">
    <property type="term" value="P:arginine catabolic process to succinate"/>
    <property type="evidence" value="ECO:0007669"/>
    <property type="project" value="UniProtKB-UniRule"/>
</dbReference>
<dbReference type="CDD" id="cd03855">
    <property type="entry name" value="M14_ASTE"/>
    <property type="match status" value="1"/>
</dbReference>
<dbReference type="Gene3D" id="3.40.630.10">
    <property type="entry name" value="Zn peptidases"/>
    <property type="match status" value="1"/>
</dbReference>
<dbReference type="HAMAP" id="MF_00767">
    <property type="entry name" value="Arg_catab_AstE"/>
    <property type="match status" value="1"/>
</dbReference>
<dbReference type="InterPro" id="IPR050178">
    <property type="entry name" value="AspA/AstE_fam"/>
</dbReference>
<dbReference type="InterPro" id="IPR055438">
    <property type="entry name" value="AstE_AspA_cat"/>
</dbReference>
<dbReference type="InterPro" id="IPR007036">
    <property type="entry name" value="Aste_AspA_hybrid_dom"/>
</dbReference>
<dbReference type="InterPro" id="IPR016681">
    <property type="entry name" value="SuccinylGlu_desuccinylase"/>
</dbReference>
<dbReference type="NCBIfam" id="TIGR03242">
    <property type="entry name" value="arg_catab_astE"/>
    <property type="match status" value="1"/>
</dbReference>
<dbReference type="NCBIfam" id="NF003706">
    <property type="entry name" value="PRK05324.1"/>
    <property type="match status" value="1"/>
</dbReference>
<dbReference type="PANTHER" id="PTHR15162">
    <property type="entry name" value="ASPARTOACYLASE"/>
    <property type="match status" value="1"/>
</dbReference>
<dbReference type="PANTHER" id="PTHR15162:SF7">
    <property type="entry name" value="SUCCINYLGLUTAMATE DESUCCINYLASE"/>
    <property type="match status" value="1"/>
</dbReference>
<dbReference type="Pfam" id="PF24827">
    <property type="entry name" value="AstE_AspA_cat"/>
    <property type="match status" value="1"/>
</dbReference>
<dbReference type="Pfam" id="PF04952">
    <property type="entry name" value="AstE_AspA_hybrid"/>
    <property type="match status" value="1"/>
</dbReference>
<dbReference type="PIRSF" id="PIRSF017020">
    <property type="entry name" value="AstE"/>
    <property type="match status" value="1"/>
</dbReference>
<dbReference type="SUPFAM" id="SSF53187">
    <property type="entry name" value="Zn-dependent exopeptidases"/>
    <property type="match status" value="1"/>
</dbReference>
<reference key="1">
    <citation type="submission" date="2008-02" db="EMBL/GenBank/DDBJ databases">
        <title>Complete sequence of Shewanella woodyi ATCC 51908.</title>
        <authorList>
            <consortium name="US DOE Joint Genome Institute"/>
            <person name="Copeland A."/>
            <person name="Lucas S."/>
            <person name="Lapidus A."/>
            <person name="Glavina del Rio T."/>
            <person name="Dalin E."/>
            <person name="Tice H."/>
            <person name="Bruce D."/>
            <person name="Goodwin L."/>
            <person name="Pitluck S."/>
            <person name="Sims D."/>
            <person name="Brettin T."/>
            <person name="Detter J.C."/>
            <person name="Han C."/>
            <person name="Kuske C.R."/>
            <person name="Schmutz J."/>
            <person name="Larimer F."/>
            <person name="Land M."/>
            <person name="Hauser L."/>
            <person name="Kyrpides N."/>
            <person name="Lykidis A."/>
            <person name="Zhao J.-S."/>
            <person name="Richardson P."/>
        </authorList>
    </citation>
    <scope>NUCLEOTIDE SEQUENCE [LARGE SCALE GENOMIC DNA]</scope>
    <source>
        <strain>ATCC 51908 / MS32</strain>
    </source>
</reference>
<organism>
    <name type="scientific">Shewanella woodyi (strain ATCC 51908 / MS32)</name>
    <dbReference type="NCBI Taxonomy" id="392500"/>
    <lineage>
        <taxon>Bacteria</taxon>
        <taxon>Pseudomonadati</taxon>
        <taxon>Pseudomonadota</taxon>
        <taxon>Gammaproteobacteria</taxon>
        <taxon>Alteromonadales</taxon>
        <taxon>Shewanellaceae</taxon>
        <taxon>Shewanella</taxon>
    </lineage>
</organism>
<comment type="function">
    <text evidence="1">Transforms N(2)-succinylglutamate into succinate and glutamate.</text>
</comment>
<comment type="catalytic activity">
    <reaction evidence="1">
        <text>N-succinyl-L-glutamate + H2O = L-glutamate + succinate</text>
        <dbReference type="Rhea" id="RHEA:15169"/>
        <dbReference type="ChEBI" id="CHEBI:15377"/>
        <dbReference type="ChEBI" id="CHEBI:29985"/>
        <dbReference type="ChEBI" id="CHEBI:30031"/>
        <dbReference type="ChEBI" id="CHEBI:58763"/>
        <dbReference type="EC" id="3.5.1.96"/>
    </reaction>
</comment>
<comment type="cofactor">
    <cofactor evidence="1">
        <name>Zn(2+)</name>
        <dbReference type="ChEBI" id="CHEBI:29105"/>
    </cofactor>
    <text evidence="1">Binds 1 zinc ion per subunit.</text>
</comment>
<comment type="pathway">
    <text evidence="1">Amino-acid degradation; L-arginine degradation via AST pathway; L-glutamate and succinate from L-arginine: step 5/5.</text>
</comment>
<comment type="similarity">
    <text evidence="1">Belongs to the AspA/AstE family. Succinylglutamate desuccinylase subfamily.</text>
</comment>